<protein>
    <recommendedName>
        <fullName evidence="1">Chaperonin GroEL</fullName>
        <ecNumber evidence="1">5.6.1.7</ecNumber>
    </recommendedName>
    <alternativeName>
        <fullName evidence="1">60 kDa chaperonin</fullName>
    </alternativeName>
    <alternativeName>
        <fullName evidence="1">Chaperonin-60</fullName>
        <shortName evidence="1">Cpn60</shortName>
    </alternativeName>
</protein>
<reference key="1">
    <citation type="journal article" date="2003" name="Science">
        <title>Genome of Geobacter sulfurreducens: metal reduction in subsurface environments.</title>
        <authorList>
            <person name="Methe B.A."/>
            <person name="Nelson K.E."/>
            <person name="Eisen J.A."/>
            <person name="Paulsen I.T."/>
            <person name="Nelson W.C."/>
            <person name="Heidelberg J.F."/>
            <person name="Wu D."/>
            <person name="Wu M."/>
            <person name="Ward N.L."/>
            <person name="Beanan M.J."/>
            <person name="Dodson R.J."/>
            <person name="Madupu R."/>
            <person name="Brinkac L.M."/>
            <person name="Daugherty S.C."/>
            <person name="DeBoy R.T."/>
            <person name="Durkin A.S."/>
            <person name="Gwinn M.L."/>
            <person name="Kolonay J.F."/>
            <person name="Sullivan S.A."/>
            <person name="Haft D.H."/>
            <person name="Selengut J."/>
            <person name="Davidsen T.M."/>
            <person name="Zafar N."/>
            <person name="White O."/>
            <person name="Tran B."/>
            <person name="Romero C."/>
            <person name="Forberger H.A."/>
            <person name="Weidman J.F."/>
            <person name="Khouri H.M."/>
            <person name="Feldblyum T.V."/>
            <person name="Utterback T.R."/>
            <person name="Van Aken S.E."/>
            <person name="Lovley D.R."/>
            <person name="Fraser C.M."/>
        </authorList>
    </citation>
    <scope>NUCLEOTIDE SEQUENCE [LARGE SCALE GENOMIC DNA]</scope>
    <source>
        <strain>ATCC 51573 / DSM 12127 / PCA</strain>
    </source>
</reference>
<proteinExistence type="inferred from homology"/>
<feature type="chain" id="PRO_0000063382" description="Chaperonin GroEL">
    <location>
        <begin position="1"/>
        <end position="544"/>
    </location>
</feature>
<feature type="binding site" evidence="1">
    <location>
        <begin position="30"/>
        <end position="33"/>
    </location>
    <ligand>
        <name>ATP</name>
        <dbReference type="ChEBI" id="CHEBI:30616"/>
    </ligand>
</feature>
<feature type="binding site" evidence="1">
    <location>
        <position position="51"/>
    </location>
    <ligand>
        <name>ATP</name>
        <dbReference type="ChEBI" id="CHEBI:30616"/>
    </ligand>
</feature>
<feature type="binding site" evidence="1">
    <location>
        <begin position="87"/>
        <end position="91"/>
    </location>
    <ligand>
        <name>ATP</name>
        <dbReference type="ChEBI" id="CHEBI:30616"/>
    </ligand>
</feature>
<feature type="binding site" evidence="1">
    <location>
        <position position="415"/>
    </location>
    <ligand>
        <name>ATP</name>
        <dbReference type="ChEBI" id="CHEBI:30616"/>
    </ligand>
</feature>
<feature type="binding site" evidence="1">
    <location>
        <begin position="478"/>
        <end position="480"/>
    </location>
    <ligand>
        <name>ATP</name>
        <dbReference type="ChEBI" id="CHEBI:30616"/>
    </ligand>
</feature>
<feature type="binding site" evidence="1">
    <location>
        <position position="494"/>
    </location>
    <ligand>
        <name>ATP</name>
        <dbReference type="ChEBI" id="CHEBI:30616"/>
    </ligand>
</feature>
<sequence length="544" mass="58149">MAARIIKFDQEGRNAILKGVNTLADAVKVTLGPKGRNVVIEKAFGSPLITKDGVTVAKEIELEDKFENMGAQLVKEVASKTSDVAGDGTTTATVLAQAIYRQGSKLVAAGHNPMEIKRGIDKAVETIVAELKSISKPIKDHKEIAQVGTISANNDKTIGDIIAQAMEKVGKEGVITVEEAKAMETSLETVEGMQFDRGYLSPYFVTDPERMEASLENAMILIHDKKISNMKDLLPVLEQTAKSGRPLLIIAEDIEGEALATLVVNKLRGVLNICAVKAPGFGDRRKAMLEDIAILTGGQVISEEIGNKLENTTMDMLGRAKRITVDKDNTTIIDGDGKEADIQGRVKQIRAQIEETTSDYDREKLQERLAKLVGGVAVIKVGAATETEMKEKKARVEDALHATRAAVDEGIVPGGGVAYLRALASLDALSLPTEQQFGVNVIKRSLEEPIRQIAQNAGVDGSIVVDKVKNSKDAFGYNAAEDEYVDMLAAGIIDPTKVSRSALQNAASVAGLMLTTEAMIADKPKEEAPMPAMPGGMGGMGGMM</sequence>
<accession>Q747C7</accession>
<dbReference type="EC" id="5.6.1.7" evidence="1"/>
<dbReference type="EMBL" id="AE017180">
    <property type="protein sequence ID" value="AAR36730.1"/>
    <property type="molecule type" value="Genomic_DNA"/>
</dbReference>
<dbReference type="RefSeq" id="NP_954380.1">
    <property type="nucleotide sequence ID" value="NC_002939.5"/>
</dbReference>
<dbReference type="RefSeq" id="WP_010943952.1">
    <property type="nucleotide sequence ID" value="NC_002939.5"/>
</dbReference>
<dbReference type="SMR" id="Q747C7"/>
<dbReference type="FunCoup" id="Q747C7">
    <property type="interactions" value="764"/>
</dbReference>
<dbReference type="STRING" id="243231.GSU3340"/>
<dbReference type="EnsemblBacteria" id="AAR36730">
    <property type="protein sequence ID" value="AAR36730"/>
    <property type="gene ID" value="GSU3340"/>
</dbReference>
<dbReference type="KEGG" id="gsu:GSU3340"/>
<dbReference type="PATRIC" id="fig|243231.5.peg.3361"/>
<dbReference type="eggNOG" id="COG0459">
    <property type="taxonomic scope" value="Bacteria"/>
</dbReference>
<dbReference type="HOGENOM" id="CLU_016503_3_0_7"/>
<dbReference type="InParanoid" id="Q747C7"/>
<dbReference type="OrthoDB" id="9766614at2"/>
<dbReference type="Proteomes" id="UP000000577">
    <property type="component" value="Chromosome"/>
</dbReference>
<dbReference type="GO" id="GO:1990220">
    <property type="term" value="C:GroEL-GroES complex"/>
    <property type="evidence" value="ECO:0000318"/>
    <property type="project" value="GO_Central"/>
</dbReference>
<dbReference type="GO" id="GO:0005524">
    <property type="term" value="F:ATP binding"/>
    <property type="evidence" value="ECO:0000318"/>
    <property type="project" value="GO_Central"/>
</dbReference>
<dbReference type="GO" id="GO:0140662">
    <property type="term" value="F:ATP-dependent protein folding chaperone"/>
    <property type="evidence" value="ECO:0007669"/>
    <property type="project" value="InterPro"/>
</dbReference>
<dbReference type="GO" id="GO:0016853">
    <property type="term" value="F:isomerase activity"/>
    <property type="evidence" value="ECO:0007669"/>
    <property type="project" value="UniProtKB-KW"/>
</dbReference>
<dbReference type="GO" id="GO:0051082">
    <property type="term" value="F:unfolded protein binding"/>
    <property type="evidence" value="ECO:0000318"/>
    <property type="project" value="GO_Central"/>
</dbReference>
<dbReference type="GO" id="GO:0051085">
    <property type="term" value="P:chaperone cofactor-dependent protein refolding"/>
    <property type="evidence" value="ECO:0000318"/>
    <property type="project" value="GO_Central"/>
</dbReference>
<dbReference type="GO" id="GO:0042026">
    <property type="term" value="P:protein refolding"/>
    <property type="evidence" value="ECO:0007669"/>
    <property type="project" value="UniProtKB-UniRule"/>
</dbReference>
<dbReference type="GO" id="GO:0009408">
    <property type="term" value="P:response to heat"/>
    <property type="evidence" value="ECO:0000318"/>
    <property type="project" value="GO_Central"/>
</dbReference>
<dbReference type="CDD" id="cd03344">
    <property type="entry name" value="GroEL"/>
    <property type="match status" value="1"/>
</dbReference>
<dbReference type="FunFam" id="1.10.560.10:FF:000001">
    <property type="entry name" value="60 kDa chaperonin"/>
    <property type="match status" value="1"/>
</dbReference>
<dbReference type="FunFam" id="3.50.7.10:FF:000001">
    <property type="entry name" value="60 kDa chaperonin"/>
    <property type="match status" value="1"/>
</dbReference>
<dbReference type="Gene3D" id="3.50.7.10">
    <property type="entry name" value="GroEL"/>
    <property type="match status" value="1"/>
</dbReference>
<dbReference type="Gene3D" id="1.10.560.10">
    <property type="entry name" value="GroEL-like equatorial domain"/>
    <property type="match status" value="1"/>
</dbReference>
<dbReference type="Gene3D" id="3.30.260.10">
    <property type="entry name" value="TCP-1-like chaperonin intermediate domain"/>
    <property type="match status" value="1"/>
</dbReference>
<dbReference type="HAMAP" id="MF_00600">
    <property type="entry name" value="CH60"/>
    <property type="match status" value="1"/>
</dbReference>
<dbReference type="InterPro" id="IPR018370">
    <property type="entry name" value="Chaperonin_Cpn60_CS"/>
</dbReference>
<dbReference type="InterPro" id="IPR001844">
    <property type="entry name" value="Cpn60/GroEL"/>
</dbReference>
<dbReference type="InterPro" id="IPR002423">
    <property type="entry name" value="Cpn60/GroEL/TCP-1"/>
</dbReference>
<dbReference type="InterPro" id="IPR027409">
    <property type="entry name" value="GroEL-like_apical_dom_sf"/>
</dbReference>
<dbReference type="InterPro" id="IPR027413">
    <property type="entry name" value="GROEL-like_equatorial_sf"/>
</dbReference>
<dbReference type="InterPro" id="IPR027410">
    <property type="entry name" value="TCP-1-like_intermed_sf"/>
</dbReference>
<dbReference type="NCBIfam" id="TIGR02348">
    <property type="entry name" value="GroEL"/>
    <property type="match status" value="1"/>
</dbReference>
<dbReference type="NCBIfam" id="NF000592">
    <property type="entry name" value="PRK00013.1"/>
    <property type="match status" value="1"/>
</dbReference>
<dbReference type="NCBIfam" id="NF009487">
    <property type="entry name" value="PRK12849.1"/>
    <property type="match status" value="1"/>
</dbReference>
<dbReference type="NCBIfam" id="NF009488">
    <property type="entry name" value="PRK12850.1"/>
    <property type="match status" value="1"/>
</dbReference>
<dbReference type="NCBIfam" id="NF009489">
    <property type="entry name" value="PRK12851.1"/>
    <property type="match status" value="1"/>
</dbReference>
<dbReference type="PANTHER" id="PTHR45633">
    <property type="entry name" value="60 KDA HEAT SHOCK PROTEIN, MITOCHONDRIAL"/>
    <property type="match status" value="1"/>
</dbReference>
<dbReference type="Pfam" id="PF00118">
    <property type="entry name" value="Cpn60_TCP1"/>
    <property type="match status" value="1"/>
</dbReference>
<dbReference type="PRINTS" id="PR00298">
    <property type="entry name" value="CHAPERONIN60"/>
</dbReference>
<dbReference type="SUPFAM" id="SSF52029">
    <property type="entry name" value="GroEL apical domain-like"/>
    <property type="match status" value="1"/>
</dbReference>
<dbReference type="SUPFAM" id="SSF48592">
    <property type="entry name" value="GroEL equatorial domain-like"/>
    <property type="match status" value="1"/>
</dbReference>
<dbReference type="SUPFAM" id="SSF54849">
    <property type="entry name" value="GroEL-intermediate domain like"/>
    <property type="match status" value="1"/>
</dbReference>
<dbReference type="PROSITE" id="PS00296">
    <property type="entry name" value="CHAPERONINS_CPN60"/>
    <property type="match status" value="1"/>
</dbReference>
<organism>
    <name type="scientific">Geobacter sulfurreducens (strain ATCC 51573 / DSM 12127 / PCA)</name>
    <dbReference type="NCBI Taxonomy" id="243231"/>
    <lineage>
        <taxon>Bacteria</taxon>
        <taxon>Pseudomonadati</taxon>
        <taxon>Thermodesulfobacteriota</taxon>
        <taxon>Desulfuromonadia</taxon>
        <taxon>Geobacterales</taxon>
        <taxon>Geobacteraceae</taxon>
        <taxon>Geobacter</taxon>
    </lineage>
</organism>
<gene>
    <name evidence="1" type="primary">groEL</name>
    <name evidence="1" type="synonym">groL</name>
    <name type="ordered locus">GSU3340</name>
</gene>
<evidence type="ECO:0000255" key="1">
    <source>
        <dbReference type="HAMAP-Rule" id="MF_00600"/>
    </source>
</evidence>
<comment type="function">
    <text evidence="1">Together with its co-chaperonin GroES, plays an essential role in assisting protein folding. The GroEL-GroES system forms a nano-cage that allows encapsulation of the non-native substrate proteins and provides a physical environment optimized to promote and accelerate protein folding.</text>
</comment>
<comment type="catalytic activity">
    <reaction evidence="1">
        <text>ATP + H2O + a folded polypeptide = ADP + phosphate + an unfolded polypeptide.</text>
        <dbReference type="EC" id="5.6.1.7"/>
    </reaction>
</comment>
<comment type="subunit">
    <text evidence="1">Forms a cylinder of 14 subunits composed of two heptameric rings stacked back-to-back. Interacts with the co-chaperonin GroES.</text>
</comment>
<comment type="subcellular location">
    <subcellularLocation>
        <location evidence="1">Cytoplasm</location>
    </subcellularLocation>
</comment>
<comment type="similarity">
    <text evidence="1">Belongs to the chaperonin (HSP60) family.</text>
</comment>
<name>CH60_GEOSL</name>
<keyword id="KW-0067">ATP-binding</keyword>
<keyword id="KW-0143">Chaperone</keyword>
<keyword id="KW-0963">Cytoplasm</keyword>
<keyword id="KW-0413">Isomerase</keyword>
<keyword id="KW-0547">Nucleotide-binding</keyword>
<keyword id="KW-1185">Reference proteome</keyword>